<dbReference type="EMBL" id="Y14967">
    <property type="protein sequence ID" value="CAA75205.1"/>
    <property type="molecule type" value="Genomic_DNA"/>
</dbReference>
<dbReference type="EMBL" id="AL583917">
    <property type="protein sequence ID" value="CAC29563.1"/>
    <property type="molecule type" value="Genomic_DNA"/>
</dbReference>
<dbReference type="PIR" id="T10037">
    <property type="entry name" value="T10037"/>
</dbReference>
<dbReference type="RefSeq" id="NP_301168.1">
    <property type="nucleotide sequence ID" value="NC_002677.1"/>
</dbReference>
<dbReference type="SMR" id="O33089"/>
<dbReference type="STRING" id="272631.gene:17573867"/>
<dbReference type="KEGG" id="mle:ML0055"/>
<dbReference type="PATRIC" id="fig|272631.5.peg.78"/>
<dbReference type="Leproma" id="ML0055"/>
<dbReference type="eggNOG" id="COG0464">
    <property type="taxonomic scope" value="Bacteria"/>
</dbReference>
<dbReference type="HOGENOM" id="CLU_008749_5_0_11"/>
<dbReference type="OrthoDB" id="9806903at2"/>
<dbReference type="Proteomes" id="UP000000806">
    <property type="component" value="Chromosome"/>
</dbReference>
<dbReference type="GO" id="GO:0005737">
    <property type="term" value="C:cytoplasm"/>
    <property type="evidence" value="ECO:0007669"/>
    <property type="project" value="UniProtKB-SubCell"/>
</dbReference>
<dbReference type="GO" id="GO:0005524">
    <property type="term" value="F:ATP binding"/>
    <property type="evidence" value="ECO:0007669"/>
    <property type="project" value="UniProtKB-KW"/>
</dbReference>
<dbReference type="GO" id="GO:0016887">
    <property type="term" value="F:ATP hydrolysis activity"/>
    <property type="evidence" value="ECO:0007669"/>
    <property type="project" value="InterPro"/>
</dbReference>
<dbReference type="CDD" id="cd00009">
    <property type="entry name" value="AAA"/>
    <property type="match status" value="1"/>
</dbReference>
<dbReference type="FunFam" id="3.40.50.300:FF:000216">
    <property type="entry name" value="Type VII secretion ATPase EccA"/>
    <property type="match status" value="1"/>
</dbReference>
<dbReference type="Gene3D" id="1.10.8.60">
    <property type="match status" value="1"/>
</dbReference>
<dbReference type="Gene3D" id="3.40.50.300">
    <property type="entry name" value="P-loop containing nucleotide triphosphate hydrolases"/>
    <property type="match status" value="1"/>
</dbReference>
<dbReference type="Gene3D" id="1.25.40.10">
    <property type="entry name" value="Tetratricopeptide repeat domain"/>
    <property type="match status" value="1"/>
</dbReference>
<dbReference type="InterPro" id="IPR003593">
    <property type="entry name" value="AAA+_ATPase"/>
</dbReference>
<dbReference type="InterPro" id="IPR041627">
    <property type="entry name" value="AAA_lid_6"/>
</dbReference>
<dbReference type="InterPro" id="IPR003959">
    <property type="entry name" value="ATPase_AAA_core"/>
</dbReference>
<dbReference type="InterPro" id="IPR000641">
    <property type="entry name" value="CbxX/CfxQ"/>
</dbReference>
<dbReference type="InterPro" id="IPR050773">
    <property type="entry name" value="CbxX/CfxQ_RuBisCO_ESX"/>
</dbReference>
<dbReference type="InterPro" id="IPR027417">
    <property type="entry name" value="P-loop_NTPase"/>
</dbReference>
<dbReference type="InterPro" id="IPR023835">
    <property type="entry name" value="T7SS_EccA"/>
</dbReference>
<dbReference type="InterPro" id="IPR049078">
    <property type="entry name" value="T7SS_EccA1-like_N"/>
</dbReference>
<dbReference type="InterPro" id="IPR011990">
    <property type="entry name" value="TPR-like_helical_dom_sf"/>
</dbReference>
<dbReference type="NCBIfam" id="TIGR03922">
    <property type="entry name" value="T7SS_EccA"/>
    <property type="match status" value="1"/>
</dbReference>
<dbReference type="PANTHER" id="PTHR43392">
    <property type="entry name" value="AAA-TYPE ATPASE FAMILY PROTEIN / ANKYRIN REPEAT FAMILY PROTEIN"/>
    <property type="match status" value="1"/>
</dbReference>
<dbReference type="PANTHER" id="PTHR43392:SF2">
    <property type="entry name" value="AAA-TYPE ATPASE FAMILY PROTEIN _ ANKYRIN REPEAT FAMILY PROTEIN"/>
    <property type="match status" value="1"/>
</dbReference>
<dbReference type="Pfam" id="PF00004">
    <property type="entry name" value="AAA"/>
    <property type="match status" value="1"/>
</dbReference>
<dbReference type="Pfam" id="PF17866">
    <property type="entry name" value="AAA_lid_6"/>
    <property type="match status" value="1"/>
</dbReference>
<dbReference type="Pfam" id="PF21545">
    <property type="entry name" value="T7SS_EccA1_N"/>
    <property type="match status" value="1"/>
</dbReference>
<dbReference type="PRINTS" id="PR00819">
    <property type="entry name" value="CBXCFQXSUPER"/>
</dbReference>
<dbReference type="SMART" id="SM00382">
    <property type="entry name" value="AAA"/>
    <property type="match status" value="1"/>
</dbReference>
<dbReference type="SUPFAM" id="SSF52540">
    <property type="entry name" value="P-loop containing nucleoside triphosphate hydrolases"/>
    <property type="match status" value="1"/>
</dbReference>
<name>ECCA1_MYCLE</name>
<sequence length="573" mass="62342">MIDRLGSLFESAASMLPMSEARSFELFTEITNYDETACDAWIGRIRCGDTDRVTLFRAWYSRRNFGQLSGSVQIPMTTLNARVPIGGLYGDITYPVTSPLAITMGFAACEAAQGNFADAMEAIDATSITGSEHLVAWLKAVVYGAAERWTDVIDEVKGAGKWPDKFLAGAAGVAHGVAAANLGLFTEAERRLTEANDSPAGEACARSIAWYLAMARRSQGNEDAAVALLEWLQTTHPESKVSAALKDPSYRLTTTTAEQIAARADPWDPSSVVTDNSDRDRLLTQAQAELDRQIGLTRVKTQIERYRAATMMAKVRAAKGMKVAQPSKHMIFTGPPGTGKTTIARVVANILAGLGVISEPKLVETSRKDFVAEYEGQSAVKAAKTIDLALGGVLFIDEAYALVQERDGRTDPFGQEALDTLLARMENDRDRLVVIIAGYSSDIDRLLETNEGLRSRFATRIEFDTYSPDELLEIAKVIATDADSSLSAEASKNLLEAAKQLAQRTLRGRPALDVAGNGRYARQLVEAAEQCRDMRLARGVDIEQLDVDRLQEINGSDMAEAIATVHAHLNIRE</sequence>
<proteinExistence type="inferred from homology"/>
<gene>
    <name evidence="4" type="primary">eccA1</name>
    <name type="ordered locus">ML0055</name>
    <name type="ORF">MLCB628.18c</name>
</gene>
<accession>O33089</accession>
<keyword id="KW-0067">ATP-binding</keyword>
<keyword id="KW-0963">Cytoplasm</keyword>
<keyword id="KW-0547">Nucleotide-binding</keyword>
<keyword id="KW-1185">Reference proteome</keyword>
<evidence type="ECO:0000250" key="1">
    <source>
        <dbReference type="UniProtKB" id="B2HSU9"/>
    </source>
</evidence>
<evidence type="ECO:0000250" key="2">
    <source>
        <dbReference type="UniProtKB" id="P9WPH9"/>
    </source>
</evidence>
<evidence type="ECO:0000255" key="3"/>
<evidence type="ECO:0000303" key="4">
    <source>
    </source>
</evidence>
<evidence type="ECO:0000305" key="5"/>
<feature type="chain" id="PRO_0000063048" description="ESX-1 secretion system protein EccA1">
    <location>
        <begin position="1"/>
        <end position="573"/>
    </location>
</feature>
<feature type="binding site" evidence="3">
    <location>
        <begin position="334"/>
        <end position="341"/>
    </location>
    <ligand>
        <name>ATP</name>
        <dbReference type="ChEBI" id="CHEBI:30616"/>
    </ligand>
</feature>
<protein>
    <recommendedName>
        <fullName evidence="5">ESX-1 secretion system protein EccA1</fullName>
    </recommendedName>
    <alternativeName>
        <fullName evidence="4">ESX conserved component A1</fullName>
    </alternativeName>
    <alternativeName>
        <fullName evidence="5">Type VII secretion system protein EccA1</fullName>
        <shortName evidence="5">T7SS protein EccA1</shortName>
    </alternativeName>
</protein>
<comment type="function">
    <text evidence="2">Part of the ESX-1 / type VII specialized secretion system (T7SS), which exports several proteins including EsxA and EsxB. EccA1 exhibits ATPase activity and may provide energy for the export of ESX-1 substrates (By similarity).</text>
</comment>
<comment type="subunit">
    <text evidence="2">Part of the ESX-1 / type VII secretion system (T7SS), which is composed of cytosolic and membrane components (By similarity).</text>
</comment>
<comment type="subcellular location">
    <subcellularLocation>
        <location evidence="1">Cytoplasm</location>
    </subcellularLocation>
</comment>
<comment type="similarity">
    <text evidence="5">Belongs to the CbxX/CfxQ family.</text>
</comment>
<organism>
    <name type="scientific">Mycobacterium leprae (strain TN)</name>
    <dbReference type="NCBI Taxonomy" id="272631"/>
    <lineage>
        <taxon>Bacteria</taxon>
        <taxon>Bacillati</taxon>
        <taxon>Actinomycetota</taxon>
        <taxon>Actinomycetes</taxon>
        <taxon>Mycobacteriales</taxon>
        <taxon>Mycobacteriaceae</taxon>
        <taxon>Mycobacterium</taxon>
    </lineage>
</organism>
<reference key="1">
    <citation type="journal article" date="2001" name="Nature">
        <title>Massive gene decay in the leprosy bacillus.</title>
        <authorList>
            <person name="Cole S.T."/>
            <person name="Eiglmeier K."/>
            <person name="Parkhill J."/>
            <person name="James K.D."/>
            <person name="Thomson N.R."/>
            <person name="Wheeler P.R."/>
            <person name="Honore N."/>
            <person name="Garnier T."/>
            <person name="Churcher C.M."/>
            <person name="Harris D.E."/>
            <person name="Mungall K.L."/>
            <person name="Basham D."/>
            <person name="Brown D."/>
            <person name="Chillingworth T."/>
            <person name="Connor R."/>
            <person name="Davies R.M."/>
            <person name="Devlin K."/>
            <person name="Duthoy S."/>
            <person name="Feltwell T."/>
            <person name="Fraser A."/>
            <person name="Hamlin N."/>
            <person name="Holroyd S."/>
            <person name="Hornsby T."/>
            <person name="Jagels K."/>
            <person name="Lacroix C."/>
            <person name="Maclean J."/>
            <person name="Moule S."/>
            <person name="Murphy L.D."/>
            <person name="Oliver K."/>
            <person name="Quail M.A."/>
            <person name="Rajandream M.A."/>
            <person name="Rutherford K.M."/>
            <person name="Rutter S."/>
            <person name="Seeger K."/>
            <person name="Simon S."/>
            <person name="Simmonds M."/>
            <person name="Skelton J."/>
            <person name="Squares R."/>
            <person name="Squares S."/>
            <person name="Stevens K."/>
            <person name="Taylor K."/>
            <person name="Whitehead S."/>
            <person name="Woodward J.R."/>
            <person name="Barrell B.G."/>
        </authorList>
    </citation>
    <scope>NUCLEOTIDE SEQUENCE [LARGE SCALE GENOMIC DNA]</scope>
    <source>
        <strain>TN</strain>
    </source>
</reference>
<reference key="2">
    <citation type="journal article" date="2009" name="PLoS Pathog.">
        <title>Systematic genetic nomenclature for type VII secretion systems.</title>
        <authorList>
            <person name="Bitter W."/>
            <person name="Houben E.N."/>
            <person name="Bottai D."/>
            <person name="Brodin P."/>
            <person name="Brown E.J."/>
            <person name="Cox J.S."/>
            <person name="Derbyshire K."/>
            <person name="Fortune S.M."/>
            <person name="Gao L.Y."/>
            <person name="Liu J."/>
            <person name="Gey van Pittius N.C."/>
            <person name="Pym A.S."/>
            <person name="Rubin E.J."/>
            <person name="Sherman D.R."/>
            <person name="Cole S.T."/>
            <person name="Brosch R."/>
        </authorList>
    </citation>
    <scope>NOMENCLATURE</scope>
</reference>